<gene>
    <name type="primary">Rps24</name>
</gene>
<evidence type="ECO:0000250" key="1">
    <source>
        <dbReference type="UniProtKB" id="P62847"/>
    </source>
</evidence>
<evidence type="ECO:0000256" key="2">
    <source>
        <dbReference type="SAM" id="MobiDB-lite"/>
    </source>
</evidence>
<evidence type="ECO:0000303" key="3">
    <source>
    </source>
</evidence>
<evidence type="ECO:0000305" key="4"/>
<reference key="1">
    <citation type="journal article" date="1990" name="FEBS Lett.">
        <title>The primary structure of rat ribosomal protein S24.</title>
        <authorList>
            <person name="Chan Y.-L."/>
            <person name="Paz V."/>
            <person name="Olvera J."/>
            <person name="Wool I.G."/>
        </authorList>
    </citation>
    <scope>NUCLEOTIDE SEQUENCE [MRNA] (ISOFORM 1)</scope>
    <source>
        <strain>Sprague-Dawley</strain>
        <tissue>Liver</tissue>
    </source>
</reference>
<reference key="2">
    <citation type="journal article" date="2004" name="Genome Res.">
        <title>The status, quality, and expansion of the NIH full-length cDNA project: the Mammalian Gene Collection (MGC).</title>
        <authorList>
            <consortium name="The MGC Project Team"/>
        </authorList>
    </citation>
    <scope>NUCLEOTIDE SEQUENCE [LARGE SCALE MRNA] (ISOFORM 3)</scope>
    <source>
        <tissue>Pituitary</tissue>
    </source>
</reference>
<protein>
    <recommendedName>
        <fullName evidence="4">Small ribosomal subunit protein eS24</fullName>
    </recommendedName>
    <alternativeName>
        <fullName>40S ribosomal protein S24</fullName>
    </alternativeName>
</protein>
<accession>P62850</accession>
<accession>P16632</accession>
<accession>Q6PEC9</accession>
<organism>
    <name type="scientific">Rattus norvegicus</name>
    <name type="common">Rat</name>
    <dbReference type="NCBI Taxonomy" id="10116"/>
    <lineage>
        <taxon>Eukaryota</taxon>
        <taxon>Metazoa</taxon>
        <taxon>Chordata</taxon>
        <taxon>Craniata</taxon>
        <taxon>Vertebrata</taxon>
        <taxon>Euteleostomi</taxon>
        <taxon>Mammalia</taxon>
        <taxon>Eutheria</taxon>
        <taxon>Euarchontoglires</taxon>
        <taxon>Glires</taxon>
        <taxon>Rodentia</taxon>
        <taxon>Myomorpha</taxon>
        <taxon>Muroidea</taxon>
        <taxon>Muridae</taxon>
        <taxon>Murinae</taxon>
        <taxon>Rattus</taxon>
    </lineage>
</organism>
<sequence>MNDTVTIRTRKFMTNRLLQRKQMVIDVLHPGKATVPKTEIREKLAKMYKTTPDVIFVFGFRTHFGGGKTTGFGMIYDSLDYAKKNEPKHRLARHGLYEKKKTSRKQRKERKNRMKKVRGTAKANVGAGKKPKE</sequence>
<feature type="chain" id="PRO_0000137626" description="Small ribosomal subunit protein eS24">
    <location>
        <begin position="1"/>
        <end position="133"/>
    </location>
</feature>
<feature type="region of interest" description="Disordered" evidence="2">
    <location>
        <begin position="92"/>
        <end position="133"/>
    </location>
</feature>
<feature type="compositionally biased region" description="Basic residues" evidence="2">
    <location>
        <begin position="101"/>
        <end position="119"/>
    </location>
</feature>
<feature type="modified residue" description="N-acetylmethionine" evidence="1">
    <location>
        <position position="1"/>
    </location>
</feature>
<feature type="modified residue" description="Phosphothreonine" evidence="1">
    <location>
        <position position="9"/>
    </location>
</feature>
<feature type="cross-link" description="Glycyl lysine isopeptide (Lys-Gly) (interchain with G-Cter in SUMO2)" evidence="1">
    <location>
        <position position="37"/>
    </location>
</feature>
<feature type="splice variant" id="VSP_011367" description="In isoform 2." evidence="4">
    <location>
        <begin position="131"/>
        <end position="133"/>
    </location>
</feature>
<feature type="splice variant" id="VSP_011368" description="In isoform 3." evidence="3">
    <original>PKE</original>
    <variation>K</variation>
    <location>
        <begin position="131"/>
        <end position="133"/>
    </location>
</feature>
<keyword id="KW-0002">3D-structure</keyword>
<keyword id="KW-0007">Acetylation</keyword>
<keyword id="KW-0025">Alternative splicing</keyword>
<keyword id="KW-0963">Cytoplasm</keyword>
<keyword id="KW-1017">Isopeptide bond</keyword>
<keyword id="KW-0539">Nucleus</keyword>
<keyword id="KW-0597">Phosphoprotein</keyword>
<keyword id="KW-1185">Reference proteome</keyword>
<keyword id="KW-0687">Ribonucleoprotein</keyword>
<keyword id="KW-0689">Ribosomal protein</keyword>
<keyword id="KW-0832">Ubl conjugation</keyword>
<dbReference type="EMBL" id="X52445">
    <property type="protein sequence ID" value="CAA36684.1"/>
    <property type="molecule type" value="mRNA"/>
</dbReference>
<dbReference type="EMBL" id="X51538">
    <property type="protein sequence ID" value="CAA35918.1"/>
    <property type="molecule type" value="mRNA"/>
</dbReference>
<dbReference type="EMBL" id="BC058140">
    <property type="protein sequence ID" value="AAH58140.1"/>
    <property type="molecule type" value="mRNA"/>
</dbReference>
<dbReference type="PIR" id="S09197">
    <property type="entry name" value="R3RT24"/>
</dbReference>
<dbReference type="RefSeq" id="NP_112374.1">
    <molecule id="P62850-1"/>
    <property type="nucleotide sequence ID" value="NM_031112.1"/>
</dbReference>
<dbReference type="RefSeq" id="XP_006252593.1">
    <molecule id="P62850-3"/>
    <property type="nucleotide sequence ID" value="XM_006252531.5"/>
</dbReference>
<dbReference type="RefSeq" id="XP_006252594.1">
    <property type="nucleotide sequence ID" value="XM_006252532.3"/>
</dbReference>
<dbReference type="RefSeq" id="XP_006252595.1">
    <molecule id="P62850-2"/>
    <property type="nucleotide sequence ID" value="XM_006252533.4"/>
</dbReference>
<dbReference type="PDB" id="7QGG">
    <property type="method" value="EM"/>
    <property type="resolution" value="2.86 A"/>
    <property type="chains" value="SY=1-133"/>
</dbReference>
<dbReference type="PDBsum" id="7QGG"/>
<dbReference type="EMDB" id="EMD-13954"/>
<dbReference type="SMR" id="P62850"/>
<dbReference type="BioGRID" id="249648">
    <property type="interactions" value="2"/>
</dbReference>
<dbReference type="FunCoup" id="P62850">
    <property type="interactions" value="3156"/>
</dbReference>
<dbReference type="IntAct" id="P62850">
    <property type="interactions" value="9"/>
</dbReference>
<dbReference type="MINT" id="P62850"/>
<dbReference type="STRING" id="10116.ENSRNOP00000048903"/>
<dbReference type="iPTMnet" id="P62850"/>
<dbReference type="PhosphoSitePlus" id="P62850"/>
<dbReference type="SwissPalm" id="P62850"/>
<dbReference type="jPOST" id="P62850"/>
<dbReference type="PaxDb" id="10116-ENSRNOP00000048903"/>
<dbReference type="Ensembl" id="ENSRNOT00000013588.8">
    <molecule id="P62850-2"/>
    <property type="protein sequence ID" value="ENSRNOP00000013588.6"/>
    <property type="gene ID" value="ENSRNOG00000010189.9"/>
</dbReference>
<dbReference type="Ensembl" id="ENSRNOT00000101331.1">
    <molecule id="P62850-3"/>
    <property type="protein sequence ID" value="ENSRNOP00000082107.1"/>
    <property type="gene ID" value="ENSRNOG00000010189.9"/>
</dbReference>
<dbReference type="GeneID" id="81776"/>
<dbReference type="KEGG" id="rno:81776"/>
<dbReference type="UCSC" id="RGD:621040">
    <molecule id="P62850-1"/>
    <property type="organism name" value="rat"/>
</dbReference>
<dbReference type="AGR" id="RGD:621040"/>
<dbReference type="CTD" id="6229"/>
<dbReference type="RGD" id="621040">
    <property type="gene designation" value="Rps24"/>
</dbReference>
<dbReference type="VEuPathDB" id="HostDB:ENSRNOG00000010189"/>
<dbReference type="eggNOG" id="KOG3424">
    <property type="taxonomic scope" value="Eukaryota"/>
</dbReference>
<dbReference type="GeneTree" id="ENSGT00390000000153"/>
<dbReference type="InParanoid" id="P62850"/>
<dbReference type="OrthoDB" id="67942at9989"/>
<dbReference type="PhylomeDB" id="P62850"/>
<dbReference type="TreeFam" id="TF314134"/>
<dbReference type="Reactome" id="R-RNO-156827">
    <property type="pathway name" value="L13a-mediated translational silencing of Ceruloplasmin expression"/>
</dbReference>
<dbReference type="Reactome" id="R-RNO-1799339">
    <property type="pathway name" value="SRP-dependent cotranslational protein targeting to membrane"/>
</dbReference>
<dbReference type="Reactome" id="R-RNO-6791226">
    <property type="pathway name" value="Major pathway of rRNA processing in the nucleolus and cytosol"/>
</dbReference>
<dbReference type="Reactome" id="R-RNO-72649">
    <property type="pathway name" value="Translation initiation complex formation"/>
</dbReference>
<dbReference type="Reactome" id="R-RNO-72689">
    <property type="pathway name" value="Formation of a pool of free 40S subunits"/>
</dbReference>
<dbReference type="Reactome" id="R-RNO-72695">
    <property type="pathway name" value="Formation of the ternary complex, and subsequently, the 43S complex"/>
</dbReference>
<dbReference type="Reactome" id="R-RNO-72702">
    <property type="pathway name" value="Ribosomal scanning and start codon recognition"/>
</dbReference>
<dbReference type="Reactome" id="R-RNO-72706">
    <property type="pathway name" value="GTP hydrolysis and joining of the 60S ribosomal subunit"/>
</dbReference>
<dbReference type="Reactome" id="R-RNO-975956">
    <property type="pathway name" value="Nonsense Mediated Decay (NMD) independent of the Exon Junction Complex (EJC)"/>
</dbReference>
<dbReference type="Reactome" id="R-RNO-975957">
    <property type="pathway name" value="Nonsense Mediated Decay (NMD) enhanced by the Exon Junction Complex (EJC)"/>
</dbReference>
<dbReference type="PRO" id="PR:P62850"/>
<dbReference type="Proteomes" id="UP000002494">
    <property type="component" value="Chromosome 16"/>
</dbReference>
<dbReference type="Bgee" id="ENSRNOG00000010189">
    <property type="expression patterns" value="Expressed in ovary and 19 other cell types or tissues"/>
</dbReference>
<dbReference type="ExpressionAtlas" id="P62850">
    <property type="expression patterns" value="baseline and differential"/>
</dbReference>
<dbReference type="GO" id="GO:0022626">
    <property type="term" value="C:cytosolic ribosome"/>
    <property type="evidence" value="ECO:0000266"/>
    <property type="project" value="RGD"/>
</dbReference>
<dbReference type="GO" id="GO:0022627">
    <property type="term" value="C:cytosolic small ribosomal subunit"/>
    <property type="evidence" value="ECO:0000314"/>
    <property type="project" value="RGD"/>
</dbReference>
<dbReference type="GO" id="GO:0005730">
    <property type="term" value="C:nucleolus"/>
    <property type="evidence" value="ECO:0007669"/>
    <property type="project" value="UniProtKB-SubCell"/>
</dbReference>
<dbReference type="GO" id="GO:0005840">
    <property type="term" value="C:ribosome"/>
    <property type="evidence" value="ECO:0000303"/>
    <property type="project" value="UniProtKB"/>
</dbReference>
<dbReference type="GO" id="GO:0015935">
    <property type="term" value="C:small ribosomal subunit"/>
    <property type="evidence" value="ECO:0000314"/>
    <property type="project" value="RGD"/>
</dbReference>
<dbReference type="GO" id="GO:0032040">
    <property type="term" value="C:small-subunit processome"/>
    <property type="evidence" value="ECO:0000250"/>
    <property type="project" value="UniProtKB"/>
</dbReference>
<dbReference type="GO" id="GO:0045202">
    <property type="term" value="C:synapse"/>
    <property type="evidence" value="ECO:0000266"/>
    <property type="project" value="RGD"/>
</dbReference>
<dbReference type="GO" id="GO:0003735">
    <property type="term" value="F:structural constituent of ribosome"/>
    <property type="evidence" value="ECO:0000266"/>
    <property type="project" value="RGD"/>
</dbReference>
<dbReference type="GO" id="GO:0031369">
    <property type="term" value="F:translation initiation factor binding"/>
    <property type="evidence" value="ECO:0000353"/>
    <property type="project" value="UniProtKB"/>
</dbReference>
<dbReference type="GO" id="GO:0034101">
    <property type="term" value="P:erythrocyte homeostasis"/>
    <property type="evidence" value="ECO:0000266"/>
    <property type="project" value="RGD"/>
</dbReference>
<dbReference type="GO" id="GO:0097421">
    <property type="term" value="P:liver regeneration"/>
    <property type="evidence" value="ECO:0000270"/>
    <property type="project" value="RGD"/>
</dbReference>
<dbReference type="GO" id="GO:0042274">
    <property type="term" value="P:ribosomal small subunit biogenesis"/>
    <property type="evidence" value="ECO:0000250"/>
    <property type="project" value="UniProtKB"/>
</dbReference>
<dbReference type="GO" id="GO:0006364">
    <property type="term" value="P:rRNA processing"/>
    <property type="evidence" value="ECO:0000266"/>
    <property type="project" value="RGD"/>
</dbReference>
<dbReference type="GO" id="GO:0006413">
    <property type="term" value="P:translational initiation"/>
    <property type="evidence" value="ECO:0000303"/>
    <property type="project" value="UniProtKB"/>
</dbReference>
<dbReference type="FunFam" id="3.30.70.3370:FF:000001">
    <property type="entry name" value="40S ribosomal protein S24"/>
    <property type="match status" value="1"/>
</dbReference>
<dbReference type="Gene3D" id="3.30.70.3370">
    <property type="match status" value="1"/>
</dbReference>
<dbReference type="HAMAP" id="MF_00545">
    <property type="entry name" value="Ribosomal_eS24"/>
    <property type="match status" value="1"/>
</dbReference>
<dbReference type="InterPro" id="IPR053709">
    <property type="entry name" value="eRP_eS24_sf"/>
</dbReference>
<dbReference type="InterPro" id="IPR001976">
    <property type="entry name" value="Ribosomal_eS24"/>
</dbReference>
<dbReference type="InterPro" id="IPR018098">
    <property type="entry name" value="Ribosomal_eS24_CS"/>
</dbReference>
<dbReference type="InterPro" id="IPR012678">
    <property type="entry name" value="Ribosomal_uL23/eL15/eS24_sf"/>
</dbReference>
<dbReference type="PANTHER" id="PTHR10496">
    <property type="entry name" value="40S RIBOSOMAL PROTEIN S24"/>
    <property type="match status" value="1"/>
</dbReference>
<dbReference type="Pfam" id="PF01282">
    <property type="entry name" value="Ribosomal_S24e"/>
    <property type="match status" value="1"/>
</dbReference>
<dbReference type="SUPFAM" id="SSF54189">
    <property type="entry name" value="Ribosomal proteins S24e, L23 and L15e"/>
    <property type="match status" value="1"/>
</dbReference>
<dbReference type="PROSITE" id="PS00529">
    <property type="entry name" value="RIBOSOMAL_S24E"/>
    <property type="match status" value="1"/>
</dbReference>
<comment type="function">
    <text evidence="1">Component of the small ribosomal subunit. The ribosome is a large ribonucleoprotein complex responsible for the synthesis of proteins in the cell. Required for processing of pre-rRNA and maturation of 40S ribosomal subunits. Part of the small subunit (SSU) processome, first precursor of the small eukaryotic ribosomal subunit. During the assembly of the SSU processome in the nucleolus, many ribosome biogenesis factors, an RNA chaperone and ribosomal proteins associate with the nascent pre-rRNA and work in concert to generate RNA folding, modifications, rearrangements and cleavage as well as targeted degradation of pre-ribosomal RNA by the RNA exosome.</text>
</comment>
<comment type="subunit">
    <text evidence="1">Component of the small ribosomal subunit. Part of the small subunit (SSU) processome, composed of more than 70 proteins and the RNA chaperone small nucleolar RNA (snoRNA) U3.</text>
</comment>
<comment type="subcellular location">
    <subcellularLocation>
        <location evidence="1">Cytoplasm</location>
    </subcellularLocation>
    <subcellularLocation>
        <location evidence="1">Nucleus</location>
        <location evidence="1">Nucleolus</location>
    </subcellularLocation>
</comment>
<comment type="alternative products">
    <event type="alternative splicing"/>
    <isoform>
        <id>P62850-1</id>
        <name>1</name>
        <sequence type="displayed"/>
    </isoform>
    <isoform>
        <id>P62850-2</id>
        <name>2</name>
        <sequence type="described" ref="VSP_011367"/>
    </isoform>
    <isoform>
        <id>P62850-3</id>
        <name>3</name>
        <sequence type="described" ref="VSP_011368"/>
    </isoform>
</comment>
<comment type="similarity">
    <text evidence="4">Belongs to the eukaryotic ribosomal protein eS24 family.</text>
</comment>
<name>RS24_RAT</name>
<proteinExistence type="evidence at protein level"/>